<evidence type="ECO:0000255" key="1">
    <source>
        <dbReference type="HAMAP-Rule" id="MF_00014"/>
    </source>
</evidence>
<reference key="1">
    <citation type="submission" date="2008-06" db="EMBL/GenBank/DDBJ databases">
        <title>Complete sequence of chromosome of Prosthecochloris aestuarii DSM 271.</title>
        <authorList>
            <consortium name="US DOE Joint Genome Institute"/>
            <person name="Lucas S."/>
            <person name="Copeland A."/>
            <person name="Lapidus A."/>
            <person name="Glavina del Rio T."/>
            <person name="Dalin E."/>
            <person name="Tice H."/>
            <person name="Bruce D."/>
            <person name="Goodwin L."/>
            <person name="Pitluck S."/>
            <person name="Schmutz J."/>
            <person name="Larimer F."/>
            <person name="Land M."/>
            <person name="Hauser L."/>
            <person name="Kyrpides N."/>
            <person name="Anderson I."/>
            <person name="Liu Z."/>
            <person name="Li T."/>
            <person name="Zhao F."/>
            <person name="Overmann J."/>
            <person name="Bryant D.A."/>
            <person name="Richardson P."/>
        </authorList>
    </citation>
    <scope>NUCLEOTIDE SEQUENCE [LARGE SCALE GENOMIC DNA]</scope>
    <source>
        <strain>DSM 271 / SK 413</strain>
    </source>
</reference>
<sequence length="169" mass="19067">MNKLLYLAGRILKPKGLKGELKVLPETDFPESFLQRKLLLVGATEQSAVERRVAGATLQNGFVLLRFYGIDSREDAESIVGERIYITEDDLIPLPPDTAYIHDLVGLRVLDEDCREIGVIRDVLKLPAHEVYEIAAGDKIVLVPAIEEFVVETDLEKGEMTIRRFDEFL</sequence>
<accession>B4S7L8</accession>
<dbReference type="EMBL" id="CP001108">
    <property type="protein sequence ID" value="ACF46055.1"/>
    <property type="molecule type" value="Genomic_DNA"/>
</dbReference>
<dbReference type="RefSeq" id="WP_012505592.1">
    <property type="nucleotide sequence ID" value="NC_011059.1"/>
</dbReference>
<dbReference type="SMR" id="B4S7L8"/>
<dbReference type="STRING" id="290512.Paes_1016"/>
<dbReference type="KEGG" id="paa:Paes_1016"/>
<dbReference type="eggNOG" id="COG0806">
    <property type="taxonomic scope" value="Bacteria"/>
</dbReference>
<dbReference type="HOGENOM" id="CLU_077636_3_2_10"/>
<dbReference type="Proteomes" id="UP000002725">
    <property type="component" value="Chromosome"/>
</dbReference>
<dbReference type="GO" id="GO:0005737">
    <property type="term" value="C:cytoplasm"/>
    <property type="evidence" value="ECO:0007669"/>
    <property type="project" value="UniProtKB-SubCell"/>
</dbReference>
<dbReference type="GO" id="GO:0005840">
    <property type="term" value="C:ribosome"/>
    <property type="evidence" value="ECO:0007669"/>
    <property type="project" value="InterPro"/>
</dbReference>
<dbReference type="GO" id="GO:0043022">
    <property type="term" value="F:ribosome binding"/>
    <property type="evidence" value="ECO:0007669"/>
    <property type="project" value="InterPro"/>
</dbReference>
<dbReference type="GO" id="GO:0042274">
    <property type="term" value="P:ribosomal small subunit biogenesis"/>
    <property type="evidence" value="ECO:0007669"/>
    <property type="project" value="UniProtKB-UniRule"/>
</dbReference>
<dbReference type="GO" id="GO:0006364">
    <property type="term" value="P:rRNA processing"/>
    <property type="evidence" value="ECO:0007669"/>
    <property type="project" value="UniProtKB-UniRule"/>
</dbReference>
<dbReference type="Gene3D" id="2.30.30.240">
    <property type="entry name" value="PRC-barrel domain"/>
    <property type="match status" value="1"/>
</dbReference>
<dbReference type="Gene3D" id="2.40.30.60">
    <property type="entry name" value="RimM"/>
    <property type="match status" value="1"/>
</dbReference>
<dbReference type="HAMAP" id="MF_00014">
    <property type="entry name" value="Ribosome_mat_RimM"/>
    <property type="match status" value="1"/>
</dbReference>
<dbReference type="InterPro" id="IPR011033">
    <property type="entry name" value="PRC_barrel-like_sf"/>
</dbReference>
<dbReference type="InterPro" id="IPR056792">
    <property type="entry name" value="PRC_RimM"/>
</dbReference>
<dbReference type="InterPro" id="IPR011961">
    <property type="entry name" value="RimM"/>
</dbReference>
<dbReference type="InterPro" id="IPR002676">
    <property type="entry name" value="RimM_N"/>
</dbReference>
<dbReference type="InterPro" id="IPR036976">
    <property type="entry name" value="RimM_N_sf"/>
</dbReference>
<dbReference type="InterPro" id="IPR009000">
    <property type="entry name" value="Transl_B-barrel_sf"/>
</dbReference>
<dbReference type="NCBIfam" id="TIGR02273">
    <property type="entry name" value="16S_RimM"/>
    <property type="match status" value="1"/>
</dbReference>
<dbReference type="PANTHER" id="PTHR33692">
    <property type="entry name" value="RIBOSOME MATURATION FACTOR RIMM"/>
    <property type="match status" value="1"/>
</dbReference>
<dbReference type="PANTHER" id="PTHR33692:SF1">
    <property type="entry name" value="RIBOSOME MATURATION FACTOR RIMM"/>
    <property type="match status" value="1"/>
</dbReference>
<dbReference type="Pfam" id="PF24986">
    <property type="entry name" value="PRC_RimM"/>
    <property type="match status" value="1"/>
</dbReference>
<dbReference type="Pfam" id="PF01782">
    <property type="entry name" value="RimM"/>
    <property type="match status" value="1"/>
</dbReference>
<dbReference type="SUPFAM" id="SSF50346">
    <property type="entry name" value="PRC-barrel domain"/>
    <property type="match status" value="1"/>
</dbReference>
<dbReference type="SUPFAM" id="SSF50447">
    <property type="entry name" value="Translation proteins"/>
    <property type="match status" value="1"/>
</dbReference>
<proteinExistence type="inferred from homology"/>
<gene>
    <name evidence="1" type="primary">rimM</name>
    <name type="ordered locus">Paes_1016</name>
</gene>
<name>RIMM_PROA2</name>
<protein>
    <recommendedName>
        <fullName evidence="1">Ribosome maturation factor RimM</fullName>
    </recommendedName>
</protein>
<comment type="function">
    <text evidence="1">An accessory protein needed during the final step in the assembly of 30S ribosomal subunit, possibly for assembly of the head region. Essential for efficient processing of 16S rRNA. May be needed both before and after RbfA during the maturation of 16S rRNA. It has affinity for free ribosomal 30S subunits but not for 70S ribosomes.</text>
</comment>
<comment type="subunit">
    <text evidence="1">Binds ribosomal protein uS19.</text>
</comment>
<comment type="subcellular location">
    <subcellularLocation>
        <location evidence="1">Cytoplasm</location>
    </subcellularLocation>
</comment>
<comment type="domain">
    <text evidence="1">The PRC barrel domain binds ribosomal protein uS19.</text>
</comment>
<comment type="similarity">
    <text evidence="1">Belongs to the RimM family.</text>
</comment>
<feature type="chain" id="PRO_1000196565" description="Ribosome maturation factor RimM">
    <location>
        <begin position="1"/>
        <end position="169"/>
    </location>
</feature>
<feature type="domain" description="PRC barrel" evidence="1">
    <location>
        <begin position="95"/>
        <end position="168"/>
    </location>
</feature>
<organism>
    <name type="scientific">Prosthecochloris aestuarii (strain DSM 271 / SK 413)</name>
    <dbReference type="NCBI Taxonomy" id="290512"/>
    <lineage>
        <taxon>Bacteria</taxon>
        <taxon>Pseudomonadati</taxon>
        <taxon>Chlorobiota</taxon>
        <taxon>Chlorobiia</taxon>
        <taxon>Chlorobiales</taxon>
        <taxon>Chlorobiaceae</taxon>
        <taxon>Prosthecochloris</taxon>
    </lineage>
</organism>
<keyword id="KW-0143">Chaperone</keyword>
<keyword id="KW-0963">Cytoplasm</keyword>
<keyword id="KW-0690">Ribosome biogenesis</keyword>
<keyword id="KW-0698">rRNA processing</keyword>